<keyword id="KW-0027">Amidation</keyword>
<keyword id="KW-0903">Direct protein sequencing</keyword>
<keyword id="KW-0527">Neuropeptide</keyword>
<keyword id="KW-0873">Pyrrolidone carboxylic acid</keyword>
<keyword id="KW-0964">Secreted</keyword>
<evidence type="ECO:0000250" key="1">
    <source>
        <dbReference type="UniProtKB" id="P11496"/>
    </source>
</evidence>
<evidence type="ECO:0000255" key="2"/>
<evidence type="ECO:0000269" key="3">
    <source>
    </source>
</evidence>
<evidence type="ECO:0000269" key="4">
    <source>
    </source>
</evidence>
<evidence type="ECO:0000303" key="5">
    <source>
    </source>
</evidence>
<evidence type="ECO:0000303" key="6">
    <source>
    </source>
</evidence>
<evidence type="ECO:0000305" key="7"/>
<protein>
    <recommendedName>
        <fullName evidence="5 6">Corazonin</fullName>
    </recommendedName>
    <component>
        <recommendedName>
            <fullName evidence="6">Corazonin(3-11)</fullName>
        </recommendedName>
    </component>
</protein>
<feature type="peptide" id="PRO_0000419718" description="Corazonin" evidence="4">
    <location>
        <begin position="1"/>
        <end position="11"/>
    </location>
</feature>
<feature type="peptide" id="PRO_0000419719" description="Corazonin(3-11)" evidence="4">
    <location>
        <begin position="3"/>
        <end position="11"/>
    </location>
</feature>
<feature type="modified residue" description="Pyrrolidone carboxylic acid" evidence="4">
    <location>
        <position position="1"/>
    </location>
</feature>
<feature type="modified residue" description="Asparagine amide" evidence="3 4">
    <location>
        <position position="11"/>
    </location>
</feature>
<feature type="sequence conflict" description="In Ref. 1; AA sequence." evidence="7" ref="1">
    <original>Q</original>
    <variation>E</variation>
    <location>
        <position position="1"/>
    </location>
</feature>
<name>CORZ_DELRA</name>
<dbReference type="GO" id="GO:0005576">
    <property type="term" value="C:extracellular region"/>
    <property type="evidence" value="ECO:0007669"/>
    <property type="project" value="UniProtKB-SubCell"/>
</dbReference>
<dbReference type="GO" id="GO:0007218">
    <property type="term" value="P:neuropeptide signaling pathway"/>
    <property type="evidence" value="ECO:0007669"/>
    <property type="project" value="UniProtKB-KW"/>
</dbReference>
<comment type="function">
    <text evidence="1">Cardioactive peptide. Corazonin is probably involved in the physiological regulation of the heart beat (By similarity).</text>
</comment>
<comment type="subcellular location">
    <subcellularLocation>
        <location evidence="1">Secreted</location>
    </subcellularLocation>
</comment>
<comment type="tissue specificity">
    <text evidence="3 4">In larvae, both corazonin and corazonin(3-11) are expressed in the CNS but not the midgut or thoracic perisympathetic organs (tPSO) and abdominal perisympathetic organs (aPSO). Corazonin is expressed in the ring gland (at protein level). In adults, corazonin is expressed in brain, cardiaca, corpora allata and thoracic-abdominal ganglion (at protein level).</text>
</comment>
<comment type="developmental stage">
    <text evidence="4">Detected in larvae and adults.</text>
</comment>
<comment type="mass spectrometry" mass="1369.7" method="MALDI" evidence="3 4">
    <molecule>Corazonin</molecule>
</comment>
<comment type="mass spectrometry" mass="1369.69" method="MALDI" evidence="3 4">
    <molecule>Corazonin</molecule>
</comment>
<comment type="mass spectrometry" mass="1157.56" method="MALDI" evidence="4">
    <molecule>Corazonin(3-11)</molecule>
</comment>
<comment type="similarity">
    <text evidence="2">Belongs to the corazonin family.</text>
</comment>
<organism>
    <name type="scientific">Delia radicum</name>
    <name type="common">Cabbage root fly</name>
    <name type="synonym">Anthomyia brassicae</name>
    <dbReference type="NCBI Taxonomy" id="30064"/>
    <lineage>
        <taxon>Eukaryota</taxon>
        <taxon>Metazoa</taxon>
        <taxon>Ecdysozoa</taxon>
        <taxon>Arthropoda</taxon>
        <taxon>Hexapoda</taxon>
        <taxon>Insecta</taxon>
        <taxon>Pterygota</taxon>
        <taxon>Neoptera</taxon>
        <taxon>Endopterygota</taxon>
        <taxon>Diptera</taxon>
        <taxon>Brachycera</taxon>
        <taxon>Muscomorpha</taxon>
        <taxon>Muscoidea</taxon>
        <taxon>Anthomyiidae</taxon>
        <taxon>Anthomyiinae</taxon>
        <taxon>Delia</taxon>
    </lineage>
</organism>
<proteinExistence type="evidence at protein level"/>
<sequence length="11" mass="1387">QTFQYSRGWTN</sequence>
<accession>B3EWM1</accession>
<accession>B3EWM2</accession>
<reference evidence="7" key="1">
    <citation type="journal article" date="2011" name="Peptides">
        <title>Neuropeptides associated with the central nervous system of the cabbage root fly, Delia radicum (L).</title>
        <authorList>
            <person name="Audsley N."/>
            <person name="Matthews H.J."/>
            <person name="Down R.E."/>
            <person name="Weaver R.J."/>
        </authorList>
    </citation>
    <scope>PROTEIN SEQUENCE</scope>
    <scope>TISSUE SPECIFICITY</scope>
    <scope>MASS SPECTROMETRY</scope>
    <scope>AMIDATION AT ASN-11</scope>
    <source>
        <tissue evidence="3">Abdominal ganglion</tissue>
        <tissue evidence="3">Brain</tissue>
        <tissue evidence="3">Corpora allata</tissue>
        <tissue evidence="3">Corpora cardiaca</tissue>
    </source>
</reference>
<reference evidence="7" key="2">
    <citation type="journal article" date="2012" name="PLoS ONE">
        <title>Peptidomics of the agriculturally damaging larval stage of the cabbage root fly Delia radicum (Diptera: Anthomyiidae).</title>
        <authorList>
            <person name="Zoephel J."/>
            <person name="Reiher W."/>
            <person name="Rexer K.-H."/>
            <person name="Kahnt J."/>
            <person name="Wegener C."/>
        </authorList>
    </citation>
    <scope>PROTEIN SEQUENCE</scope>
    <scope>TISSUE SPECIFICITY</scope>
    <scope>DEVELOPMENTAL STAGE</scope>
    <scope>MASS SPECTROMETRY</scope>
    <scope>PYROGLUTAMATE FORMATION AT GLN-1</scope>
    <scope>AMIDATION AT ASN-11</scope>
    <source>
        <tissue evidence="4">CNS</tissue>
        <tissue evidence="4">Ring ganglion</tissue>
    </source>
</reference>